<keyword id="KW-0028">Amino-acid biosynthesis</keyword>
<keyword id="KW-0963">Cytoplasm</keyword>
<keyword id="KW-0223">Dioxygenase</keyword>
<keyword id="KW-0408">Iron</keyword>
<keyword id="KW-0479">Metal-binding</keyword>
<keyword id="KW-0486">Methionine biosynthesis</keyword>
<keyword id="KW-0533">Nickel</keyword>
<keyword id="KW-0539">Nucleus</keyword>
<keyword id="KW-0560">Oxidoreductase</keyword>
<keyword id="KW-0597">Phosphoprotein</keyword>
<keyword id="KW-1185">Reference proteome</keyword>
<name>MTND_SCHPO</name>
<comment type="function">
    <text evidence="1">Catalyzes 2 different reactions between oxygen and the acireductone 1,2-dihydroxy-3-keto-5-methylthiopentene (DHK-MTPene) depending upon the metal bound in the active site. Fe-containing acireductone dioxygenase (Fe-ARD) produces formate and 2-keto-4-methylthiobutyrate (KMTB), the alpha-ketoacid precursor of methionine in the methionine recycle pathway. Ni-containing acireductone dioxygenase (Ni-ARD) produces methylthiopropionate, carbon monoxide and formate, and does not lie on the methionine recycle pathway.</text>
</comment>
<comment type="catalytic activity">
    <reaction evidence="1">
        <text>1,2-dihydroxy-5-(methylsulfanyl)pent-1-en-3-one + O2 = 4-methylsulfanyl-2-oxobutanoate + formate + 2 H(+)</text>
        <dbReference type="Rhea" id="RHEA:24504"/>
        <dbReference type="ChEBI" id="CHEBI:15378"/>
        <dbReference type="ChEBI" id="CHEBI:15379"/>
        <dbReference type="ChEBI" id="CHEBI:15740"/>
        <dbReference type="ChEBI" id="CHEBI:16723"/>
        <dbReference type="ChEBI" id="CHEBI:49252"/>
        <dbReference type="EC" id="1.13.11.54"/>
    </reaction>
</comment>
<comment type="catalytic activity">
    <reaction evidence="1">
        <text>1,2-dihydroxy-5-(methylsulfanyl)pent-1-en-3-one + O2 = 3-(methylsulfanyl)propanoate + CO + formate + 2 H(+)</text>
        <dbReference type="Rhea" id="RHEA:14161"/>
        <dbReference type="ChEBI" id="CHEBI:15378"/>
        <dbReference type="ChEBI" id="CHEBI:15379"/>
        <dbReference type="ChEBI" id="CHEBI:15740"/>
        <dbReference type="ChEBI" id="CHEBI:17245"/>
        <dbReference type="ChEBI" id="CHEBI:49016"/>
        <dbReference type="ChEBI" id="CHEBI:49252"/>
        <dbReference type="EC" id="1.13.11.53"/>
    </reaction>
</comment>
<comment type="cofactor">
    <cofactor evidence="1">
        <name>Fe(2+)</name>
        <dbReference type="ChEBI" id="CHEBI:29033"/>
    </cofactor>
    <cofactor evidence="1">
        <name>Ni(2+)</name>
        <dbReference type="ChEBI" id="CHEBI:49786"/>
    </cofactor>
    <text evidence="1">Binds either 1 Fe or Ni cation per monomer. Iron-binding promotes an acireductone dioxygenase reaction producing 2-keto-4-methylthiobutyrate, while nickel-binding promotes an acireductone dioxygenase reaction producing 3-(methylsulfanyl)propanoate.</text>
</comment>
<comment type="pathway">
    <text evidence="1">Amino-acid biosynthesis; L-methionine biosynthesis via salvage pathway; L-methionine from S-methyl-5-thio-alpha-D-ribose 1-phosphate: step 5/6.</text>
</comment>
<comment type="subcellular location">
    <subcellularLocation>
        <location evidence="1">Cytoplasm</location>
    </subcellularLocation>
    <subcellularLocation>
        <location evidence="1 2">Nucleus</location>
    </subcellularLocation>
</comment>
<comment type="similarity">
    <text evidence="1">Belongs to the acireductone dioxygenase (ARD) family.</text>
</comment>
<gene>
    <name type="primary">adi1</name>
    <name type="ORF">SPBC887.01</name>
</gene>
<organism>
    <name type="scientific">Schizosaccharomyces pombe (strain 972 / ATCC 24843)</name>
    <name type="common">Fission yeast</name>
    <dbReference type="NCBI Taxonomy" id="284812"/>
    <lineage>
        <taxon>Eukaryota</taxon>
        <taxon>Fungi</taxon>
        <taxon>Dikarya</taxon>
        <taxon>Ascomycota</taxon>
        <taxon>Taphrinomycotina</taxon>
        <taxon>Schizosaccharomycetes</taxon>
        <taxon>Schizosaccharomycetales</taxon>
        <taxon>Schizosaccharomycetaceae</taxon>
        <taxon>Schizosaccharomyces</taxon>
    </lineage>
</organism>
<protein>
    <recommendedName>
        <fullName evidence="1">Acireductone dioxygenase</fullName>
    </recommendedName>
    <alternativeName>
        <fullName evidence="1">Acireductone dioxygenase (Fe(2+)-requiring)</fullName>
        <shortName evidence="1">ARD'</shortName>
        <shortName evidence="1">Fe-ARD</shortName>
        <ecNumber evidence="1">1.13.11.54</ecNumber>
    </alternativeName>
    <alternativeName>
        <fullName evidence="1">Acireductone dioxygenase (Ni(2+)-requiring)</fullName>
        <shortName evidence="1">ARD</shortName>
        <shortName evidence="1">Ni-ARD</shortName>
        <ecNumber evidence="1">1.13.11.53</ecNumber>
    </alternativeName>
</protein>
<feature type="chain" id="PRO_0000315971" description="Acireductone dioxygenase">
    <location>
        <begin position="1"/>
        <end position="178"/>
    </location>
</feature>
<feature type="binding site" evidence="1">
    <location>
        <position position="82"/>
    </location>
    <ligand>
        <name>Fe(2+)</name>
        <dbReference type="ChEBI" id="CHEBI:29033"/>
        <note>for iron-dependent acireductone dioxygenase activity</note>
    </ligand>
</feature>
<feature type="binding site" evidence="1">
    <location>
        <position position="82"/>
    </location>
    <ligand>
        <name>Ni(2+)</name>
        <dbReference type="ChEBI" id="CHEBI:49786"/>
        <note>for nickel-dependent acireductone dioxygenase activity</note>
    </ligand>
</feature>
<feature type="binding site" evidence="1">
    <location>
        <position position="84"/>
    </location>
    <ligand>
        <name>Fe(2+)</name>
        <dbReference type="ChEBI" id="CHEBI:29033"/>
        <note>for iron-dependent acireductone dioxygenase activity</note>
    </ligand>
</feature>
<feature type="binding site" evidence="1">
    <location>
        <position position="84"/>
    </location>
    <ligand>
        <name>Ni(2+)</name>
        <dbReference type="ChEBI" id="CHEBI:49786"/>
        <note>for nickel-dependent acireductone dioxygenase activity</note>
    </ligand>
</feature>
<feature type="binding site" evidence="1">
    <location>
        <position position="88"/>
    </location>
    <ligand>
        <name>Fe(2+)</name>
        <dbReference type="ChEBI" id="CHEBI:29033"/>
        <note>for iron-dependent acireductone dioxygenase activity</note>
    </ligand>
</feature>
<feature type="binding site" evidence="1">
    <location>
        <position position="88"/>
    </location>
    <ligand>
        <name>Ni(2+)</name>
        <dbReference type="ChEBI" id="CHEBI:49786"/>
        <note>for nickel-dependent acireductone dioxygenase activity</note>
    </ligand>
</feature>
<feature type="binding site" evidence="1">
    <location>
        <position position="127"/>
    </location>
    <ligand>
        <name>Fe(2+)</name>
        <dbReference type="ChEBI" id="CHEBI:29033"/>
        <note>for iron-dependent acireductone dioxygenase activity</note>
    </ligand>
</feature>
<feature type="binding site" evidence="1">
    <location>
        <position position="127"/>
    </location>
    <ligand>
        <name>Ni(2+)</name>
        <dbReference type="ChEBI" id="CHEBI:49786"/>
        <note>for nickel-dependent acireductone dioxygenase activity</note>
    </ligand>
</feature>
<feature type="modified residue" description="Phosphoserine" evidence="3">
    <location>
        <position position="157"/>
    </location>
</feature>
<reference key="1">
    <citation type="journal article" date="2002" name="Nature">
        <title>The genome sequence of Schizosaccharomyces pombe.</title>
        <authorList>
            <person name="Wood V."/>
            <person name="Gwilliam R."/>
            <person name="Rajandream M.A."/>
            <person name="Lyne M.H."/>
            <person name="Lyne R."/>
            <person name="Stewart A."/>
            <person name="Sgouros J.G."/>
            <person name="Peat N."/>
            <person name="Hayles J."/>
            <person name="Baker S.G."/>
            <person name="Basham D."/>
            <person name="Bowman S."/>
            <person name="Brooks K."/>
            <person name="Brown D."/>
            <person name="Brown S."/>
            <person name="Chillingworth T."/>
            <person name="Churcher C.M."/>
            <person name="Collins M."/>
            <person name="Connor R."/>
            <person name="Cronin A."/>
            <person name="Davis P."/>
            <person name="Feltwell T."/>
            <person name="Fraser A."/>
            <person name="Gentles S."/>
            <person name="Goble A."/>
            <person name="Hamlin N."/>
            <person name="Harris D.E."/>
            <person name="Hidalgo J."/>
            <person name="Hodgson G."/>
            <person name="Holroyd S."/>
            <person name="Hornsby T."/>
            <person name="Howarth S."/>
            <person name="Huckle E.J."/>
            <person name="Hunt S."/>
            <person name="Jagels K."/>
            <person name="James K.D."/>
            <person name="Jones L."/>
            <person name="Jones M."/>
            <person name="Leather S."/>
            <person name="McDonald S."/>
            <person name="McLean J."/>
            <person name="Mooney P."/>
            <person name="Moule S."/>
            <person name="Mungall K.L."/>
            <person name="Murphy L.D."/>
            <person name="Niblett D."/>
            <person name="Odell C."/>
            <person name="Oliver K."/>
            <person name="O'Neil S."/>
            <person name="Pearson D."/>
            <person name="Quail M.A."/>
            <person name="Rabbinowitsch E."/>
            <person name="Rutherford K.M."/>
            <person name="Rutter S."/>
            <person name="Saunders D."/>
            <person name="Seeger K."/>
            <person name="Sharp S."/>
            <person name="Skelton J."/>
            <person name="Simmonds M.N."/>
            <person name="Squares R."/>
            <person name="Squares S."/>
            <person name="Stevens K."/>
            <person name="Taylor K."/>
            <person name="Taylor R.G."/>
            <person name="Tivey A."/>
            <person name="Walsh S.V."/>
            <person name="Warren T."/>
            <person name="Whitehead S."/>
            <person name="Woodward J.R."/>
            <person name="Volckaert G."/>
            <person name="Aert R."/>
            <person name="Robben J."/>
            <person name="Grymonprez B."/>
            <person name="Weltjens I."/>
            <person name="Vanstreels E."/>
            <person name="Rieger M."/>
            <person name="Schaefer M."/>
            <person name="Mueller-Auer S."/>
            <person name="Gabel C."/>
            <person name="Fuchs M."/>
            <person name="Duesterhoeft A."/>
            <person name="Fritzc C."/>
            <person name="Holzer E."/>
            <person name="Moestl D."/>
            <person name="Hilbert H."/>
            <person name="Borzym K."/>
            <person name="Langer I."/>
            <person name="Beck A."/>
            <person name="Lehrach H."/>
            <person name="Reinhardt R."/>
            <person name="Pohl T.M."/>
            <person name="Eger P."/>
            <person name="Zimmermann W."/>
            <person name="Wedler H."/>
            <person name="Wambutt R."/>
            <person name="Purnelle B."/>
            <person name="Goffeau A."/>
            <person name="Cadieu E."/>
            <person name="Dreano S."/>
            <person name="Gloux S."/>
            <person name="Lelaure V."/>
            <person name="Mottier S."/>
            <person name="Galibert F."/>
            <person name="Aves S.J."/>
            <person name="Xiang Z."/>
            <person name="Hunt C."/>
            <person name="Moore K."/>
            <person name="Hurst S.M."/>
            <person name="Lucas M."/>
            <person name="Rochet M."/>
            <person name="Gaillardin C."/>
            <person name="Tallada V.A."/>
            <person name="Garzon A."/>
            <person name="Thode G."/>
            <person name="Daga R.R."/>
            <person name="Cruzado L."/>
            <person name="Jimenez J."/>
            <person name="Sanchez M."/>
            <person name="del Rey F."/>
            <person name="Benito J."/>
            <person name="Dominguez A."/>
            <person name="Revuelta J.L."/>
            <person name="Moreno S."/>
            <person name="Armstrong J."/>
            <person name="Forsburg S.L."/>
            <person name="Cerutti L."/>
            <person name="Lowe T."/>
            <person name="McCombie W.R."/>
            <person name="Paulsen I."/>
            <person name="Potashkin J."/>
            <person name="Shpakovski G.V."/>
            <person name="Ussery D."/>
            <person name="Barrell B.G."/>
            <person name="Nurse P."/>
        </authorList>
    </citation>
    <scope>NUCLEOTIDE SEQUENCE [LARGE SCALE GENOMIC DNA]</scope>
    <source>
        <strain>972 / ATCC 24843</strain>
    </source>
</reference>
<reference key="2">
    <citation type="journal article" date="2006" name="Nat. Biotechnol.">
        <title>ORFeome cloning and global analysis of protein localization in the fission yeast Schizosaccharomyces pombe.</title>
        <authorList>
            <person name="Matsuyama A."/>
            <person name="Arai R."/>
            <person name="Yashiroda Y."/>
            <person name="Shirai A."/>
            <person name="Kamata A."/>
            <person name="Sekido S."/>
            <person name="Kobayashi Y."/>
            <person name="Hashimoto A."/>
            <person name="Hamamoto M."/>
            <person name="Hiraoka Y."/>
            <person name="Horinouchi S."/>
            <person name="Yoshida M."/>
        </authorList>
    </citation>
    <scope>SUBCELLULAR LOCATION [LARGE SCALE ANALYSIS]</scope>
</reference>
<reference key="3">
    <citation type="journal article" date="2008" name="J. Proteome Res.">
        <title>Phosphoproteome analysis of fission yeast.</title>
        <authorList>
            <person name="Wilson-Grady J.T."/>
            <person name="Villen J."/>
            <person name="Gygi S.P."/>
        </authorList>
    </citation>
    <scope>PHOSPHORYLATION [LARGE SCALE ANALYSIS] AT SER-157</scope>
    <scope>IDENTIFICATION BY MASS SPECTROMETRY</scope>
</reference>
<sequence length="178" mass="20936">MRAYIFQDEGDQRKPNDSKIEVSAEDLEAAKVSYRHHDGDLHTFADGLMKEYGFKNRDEVVVSRKGLGDRYDNMVKKFFEEHLHEDEEIRLILDGNGYFDVRSVDDRWVRIFVEKGDLIILPPGIYHRFTTTTDDYIHAMRLFHENPKWIALSRTDSTSEELDARKSYLNSIKKSVYV</sequence>
<dbReference type="EC" id="1.13.11.54" evidence="1"/>
<dbReference type="EC" id="1.13.11.53" evidence="1"/>
<dbReference type="EMBL" id="CU329671">
    <property type="protein sequence ID" value="CAA21886.1"/>
    <property type="molecule type" value="Genomic_DNA"/>
</dbReference>
<dbReference type="PIR" id="T40726">
    <property type="entry name" value="T40726"/>
</dbReference>
<dbReference type="RefSeq" id="NP_596475.1">
    <property type="nucleotide sequence ID" value="NM_001022395.2"/>
</dbReference>
<dbReference type="SMR" id="O94286"/>
<dbReference type="BioGRID" id="277745">
    <property type="interactions" value="1"/>
</dbReference>
<dbReference type="FunCoup" id="O94286">
    <property type="interactions" value="96"/>
</dbReference>
<dbReference type="STRING" id="284812.O94286"/>
<dbReference type="iPTMnet" id="O94286"/>
<dbReference type="PaxDb" id="4896-SPBC887.01.1"/>
<dbReference type="EnsemblFungi" id="SPBC887.01.1">
    <property type="protein sequence ID" value="SPBC887.01.1:pep"/>
    <property type="gene ID" value="SPBC887.01"/>
</dbReference>
<dbReference type="GeneID" id="2541231"/>
<dbReference type="KEGG" id="spo:2541231"/>
<dbReference type="PomBase" id="SPBC887.01">
    <property type="gene designation" value="adi1"/>
</dbReference>
<dbReference type="VEuPathDB" id="FungiDB:SPBC887.01"/>
<dbReference type="eggNOG" id="KOG2107">
    <property type="taxonomic scope" value="Eukaryota"/>
</dbReference>
<dbReference type="HOGENOM" id="CLU_090154_0_1_1"/>
<dbReference type="InParanoid" id="O94286"/>
<dbReference type="OMA" id="YYKVDLD"/>
<dbReference type="PhylomeDB" id="O94286"/>
<dbReference type="Reactome" id="R-SPO-1237112">
    <property type="pathway name" value="Methionine salvage pathway"/>
</dbReference>
<dbReference type="UniPathway" id="UPA00904">
    <property type="reaction ID" value="UER00878"/>
</dbReference>
<dbReference type="PRO" id="PR:O94286"/>
<dbReference type="Proteomes" id="UP000002485">
    <property type="component" value="Chromosome II"/>
</dbReference>
<dbReference type="GO" id="GO:0005829">
    <property type="term" value="C:cytosol"/>
    <property type="evidence" value="ECO:0007005"/>
    <property type="project" value="PomBase"/>
</dbReference>
<dbReference type="GO" id="GO:0005634">
    <property type="term" value="C:nucleus"/>
    <property type="evidence" value="ECO:0007005"/>
    <property type="project" value="PomBase"/>
</dbReference>
<dbReference type="GO" id="GO:0010308">
    <property type="term" value="F:acireductone dioxygenase (Ni2+-requiring) activity"/>
    <property type="evidence" value="ECO:0007669"/>
    <property type="project" value="UniProtKB-UniRule"/>
</dbReference>
<dbReference type="GO" id="GO:0010309">
    <property type="term" value="F:acireductone dioxygenase [iron(II)-requiring] activity"/>
    <property type="evidence" value="ECO:0000318"/>
    <property type="project" value="GO_Central"/>
</dbReference>
<dbReference type="GO" id="GO:0005506">
    <property type="term" value="F:iron ion binding"/>
    <property type="evidence" value="ECO:0007669"/>
    <property type="project" value="UniProtKB-UniRule"/>
</dbReference>
<dbReference type="GO" id="GO:0016151">
    <property type="term" value="F:nickel cation binding"/>
    <property type="evidence" value="ECO:0007669"/>
    <property type="project" value="UniProtKB-UniRule"/>
</dbReference>
<dbReference type="GO" id="GO:0019509">
    <property type="term" value="P:L-methionine salvage from methylthioadenosine"/>
    <property type="evidence" value="ECO:0007669"/>
    <property type="project" value="UniProtKB-UniRule"/>
</dbReference>
<dbReference type="GO" id="GO:0006555">
    <property type="term" value="P:methionine metabolic process"/>
    <property type="evidence" value="ECO:0000318"/>
    <property type="project" value="GO_Central"/>
</dbReference>
<dbReference type="CDD" id="cd02232">
    <property type="entry name" value="cupin_ARD"/>
    <property type="match status" value="1"/>
</dbReference>
<dbReference type="FunFam" id="2.60.120.10:FF:000099">
    <property type="entry name" value="1,2-dihydroxy-3-keto-5-methylthiopentene dioxygenase"/>
    <property type="match status" value="1"/>
</dbReference>
<dbReference type="Gene3D" id="2.60.120.10">
    <property type="entry name" value="Jelly Rolls"/>
    <property type="match status" value="1"/>
</dbReference>
<dbReference type="HAMAP" id="MF_03154">
    <property type="entry name" value="Salvage_MtnD_euk"/>
    <property type="match status" value="1"/>
</dbReference>
<dbReference type="InterPro" id="IPR004313">
    <property type="entry name" value="ARD"/>
</dbReference>
<dbReference type="InterPro" id="IPR027496">
    <property type="entry name" value="ARD_euk"/>
</dbReference>
<dbReference type="InterPro" id="IPR014710">
    <property type="entry name" value="RmlC-like_jellyroll"/>
</dbReference>
<dbReference type="InterPro" id="IPR011051">
    <property type="entry name" value="RmlC_Cupin_sf"/>
</dbReference>
<dbReference type="PANTHER" id="PTHR23418">
    <property type="entry name" value="ACIREDUCTONE DIOXYGENASE"/>
    <property type="match status" value="1"/>
</dbReference>
<dbReference type="PANTHER" id="PTHR23418:SF0">
    <property type="entry name" value="ACIREDUCTONE DIOXYGENASE"/>
    <property type="match status" value="1"/>
</dbReference>
<dbReference type="Pfam" id="PF03079">
    <property type="entry name" value="ARD"/>
    <property type="match status" value="1"/>
</dbReference>
<dbReference type="SUPFAM" id="SSF51182">
    <property type="entry name" value="RmlC-like cupins"/>
    <property type="match status" value="1"/>
</dbReference>
<proteinExistence type="evidence at protein level"/>
<accession>O94286</accession>
<evidence type="ECO:0000255" key="1">
    <source>
        <dbReference type="HAMAP-Rule" id="MF_03154"/>
    </source>
</evidence>
<evidence type="ECO:0000269" key="2">
    <source>
    </source>
</evidence>
<evidence type="ECO:0000269" key="3">
    <source>
    </source>
</evidence>